<organism>
    <name type="scientific">Caulobacter vibrioides (strain NA1000 / CB15N)</name>
    <name type="common">Caulobacter crescentus</name>
    <dbReference type="NCBI Taxonomy" id="565050"/>
    <lineage>
        <taxon>Bacteria</taxon>
        <taxon>Pseudomonadati</taxon>
        <taxon>Pseudomonadota</taxon>
        <taxon>Alphaproteobacteria</taxon>
        <taxon>Caulobacterales</taxon>
        <taxon>Caulobacteraceae</taxon>
        <taxon>Caulobacter</taxon>
    </lineage>
</organism>
<evidence type="ECO:0000255" key="1">
    <source>
        <dbReference type="HAMAP-Rule" id="MF_00076"/>
    </source>
</evidence>
<dbReference type="EC" id="4.2.1.19" evidence="1"/>
<dbReference type="EMBL" id="CP001340">
    <property type="protein sequence ID" value="ACL97315.1"/>
    <property type="molecule type" value="Genomic_DNA"/>
</dbReference>
<dbReference type="RefSeq" id="WP_010921561.1">
    <property type="nucleotide sequence ID" value="NC_011916.1"/>
</dbReference>
<dbReference type="RefSeq" id="YP_002519223.1">
    <property type="nucleotide sequence ID" value="NC_011916.1"/>
</dbReference>
<dbReference type="SMR" id="B8GW12"/>
<dbReference type="GeneID" id="7332698"/>
<dbReference type="KEGG" id="ccs:CCNA_03850"/>
<dbReference type="PATRIC" id="fig|565050.3.peg.3755"/>
<dbReference type="HOGENOM" id="CLU_044308_2_0_5"/>
<dbReference type="OrthoDB" id="9813612at2"/>
<dbReference type="PhylomeDB" id="B8GW12"/>
<dbReference type="UniPathway" id="UPA00031">
    <property type="reaction ID" value="UER00011"/>
</dbReference>
<dbReference type="Proteomes" id="UP000001364">
    <property type="component" value="Chromosome"/>
</dbReference>
<dbReference type="GO" id="GO:0005737">
    <property type="term" value="C:cytoplasm"/>
    <property type="evidence" value="ECO:0007669"/>
    <property type="project" value="UniProtKB-SubCell"/>
</dbReference>
<dbReference type="GO" id="GO:0004424">
    <property type="term" value="F:imidazoleglycerol-phosphate dehydratase activity"/>
    <property type="evidence" value="ECO:0007669"/>
    <property type="project" value="UniProtKB-UniRule"/>
</dbReference>
<dbReference type="GO" id="GO:0000105">
    <property type="term" value="P:L-histidine biosynthetic process"/>
    <property type="evidence" value="ECO:0007669"/>
    <property type="project" value="UniProtKB-UniRule"/>
</dbReference>
<dbReference type="CDD" id="cd07914">
    <property type="entry name" value="IGPD"/>
    <property type="match status" value="1"/>
</dbReference>
<dbReference type="FunFam" id="3.30.230.40:FF:000001">
    <property type="entry name" value="Imidazoleglycerol-phosphate dehydratase HisB"/>
    <property type="match status" value="1"/>
</dbReference>
<dbReference type="FunFam" id="3.30.230.40:FF:000003">
    <property type="entry name" value="Imidazoleglycerol-phosphate dehydratase HisB"/>
    <property type="match status" value="1"/>
</dbReference>
<dbReference type="Gene3D" id="3.30.230.40">
    <property type="entry name" value="Imidazole glycerol phosphate dehydratase, domain 1"/>
    <property type="match status" value="2"/>
</dbReference>
<dbReference type="HAMAP" id="MF_00076">
    <property type="entry name" value="HisB"/>
    <property type="match status" value="1"/>
</dbReference>
<dbReference type="InterPro" id="IPR038494">
    <property type="entry name" value="IGPD_sf"/>
</dbReference>
<dbReference type="InterPro" id="IPR000807">
    <property type="entry name" value="ImidazoleglycerolP_deHydtase"/>
</dbReference>
<dbReference type="InterPro" id="IPR020565">
    <property type="entry name" value="ImidazoleglycerP_deHydtase_CS"/>
</dbReference>
<dbReference type="InterPro" id="IPR020568">
    <property type="entry name" value="Ribosomal_Su5_D2-typ_SF"/>
</dbReference>
<dbReference type="NCBIfam" id="NF002109">
    <property type="entry name" value="PRK00951.1-5"/>
    <property type="match status" value="1"/>
</dbReference>
<dbReference type="NCBIfam" id="NF002111">
    <property type="entry name" value="PRK00951.2-1"/>
    <property type="match status" value="1"/>
</dbReference>
<dbReference type="NCBIfam" id="NF002114">
    <property type="entry name" value="PRK00951.2-4"/>
    <property type="match status" value="1"/>
</dbReference>
<dbReference type="PANTHER" id="PTHR23133:SF2">
    <property type="entry name" value="IMIDAZOLEGLYCEROL-PHOSPHATE DEHYDRATASE"/>
    <property type="match status" value="1"/>
</dbReference>
<dbReference type="PANTHER" id="PTHR23133">
    <property type="entry name" value="IMIDAZOLEGLYCEROL-PHOSPHATE DEHYDRATASE HIS7"/>
    <property type="match status" value="1"/>
</dbReference>
<dbReference type="Pfam" id="PF00475">
    <property type="entry name" value="IGPD"/>
    <property type="match status" value="1"/>
</dbReference>
<dbReference type="SUPFAM" id="SSF54211">
    <property type="entry name" value="Ribosomal protein S5 domain 2-like"/>
    <property type="match status" value="2"/>
</dbReference>
<dbReference type="PROSITE" id="PS00954">
    <property type="entry name" value="IGP_DEHYDRATASE_1"/>
    <property type="match status" value="1"/>
</dbReference>
<dbReference type="PROSITE" id="PS00955">
    <property type="entry name" value="IGP_DEHYDRATASE_2"/>
    <property type="match status" value="1"/>
</dbReference>
<name>HIS7_CAUVN</name>
<keyword id="KW-0028">Amino-acid biosynthesis</keyword>
<keyword id="KW-0963">Cytoplasm</keyword>
<keyword id="KW-0368">Histidine biosynthesis</keyword>
<keyword id="KW-0456">Lyase</keyword>
<keyword id="KW-1185">Reference proteome</keyword>
<comment type="catalytic activity">
    <reaction evidence="1">
        <text>D-erythro-1-(imidazol-4-yl)glycerol 3-phosphate = 3-(imidazol-4-yl)-2-oxopropyl phosphate + H2O</text>
        <dbReference type="Rhea" id="RHEA:11040"/>
        <dbReference type="ChEBI" id="CHEBI:15377"/>
        <dbReference type="ChEBI" id="CHEBI:57766"/>
        <dbReference type="ChEBI" id="CHEBI:58278"/>
        <dbReference type="EC" id="4.2.1.19"/>
    </reaction>
</comment>
<comment type="pathway">
    <text evidence="1">Amino-acid biosynthesis; L-histidine biosynthesis; L-histidine from 5-phospho-alpha-D-ribose 1-diphosphate: step 6/9.</text>
</comment>
<comment type="subcellular location">
    <subcellularLocation>
        <location evidence="1">Cytoplasm</location>
    </subcellularLocation>
</comment>
<comment type="similarity">
    <text evidence="1">Belongs to the imidazoleglycerol-phosphate dehydratase family.</text>
</comment>
<feature type="chain" id="PRO_1000118219" description="Imidazoleglycerol-phosphate dehydratase">
    <location>
        <begin position="1"/>
        <end position="196"/>
    </location>
</feature>
<accession>B8GW12</accession>
<gene>
    <name evidence="1" type="primary">hisB</name>
    <name type="ordered locus">CCNA_03850</name>
</gene>
<proteinExistence type="inferred from homology"/>
<protein>
    <recommendedName>
        <fullName evidence="1">Imidazoleglycerol-phosphate dehydratase</fullName>
        <shortName evidence="1">IGPD</shortName>
        <ecNumber evidence="1">4.2.1.19</ecNumber>
    </recommendedName>
</protein>
<sequence length="196" mass="21811">MARTAEVVRETKETQIRVWIDLDGTGVSTISTGIGFYDHMLESFARHGGFDLKVETKGDLHIDMHHTVEDTGIVLGQAIHKALDGFKGIRRFGSAYIPMDETLTRCAIDLSNRPYLIWKVEFKRPKVGEMDTELFKEFHHAFAMNSGACIHLETLYGDNTHHVAESGFKALARALRQAVEIDPKTGGQAPSTKGVL</sequence>
<reference key="1">
    <citation type="journal article" date="2010" name="J. Bacteriol.">
        <title>The genetic basis of laboratory adaptation in Caulobacter crescentus.</title>
        <authorList>
            <person name="Marks M.E."/>
            <person name="Castro-Rojas C.M."/>
            <person name="Teiling C."/>
            <person name="Du L."/>
            <person name="Kapatral V."/>
            <person name="Walunas T.L."/>
            <person name="Crosson S."/>
        </authorList>
    </citation>
    <scope>NUCLEOTIDE SEQUENCE [LARGE SCALE GENOMIC DNA]</scope>
    <source>
        <strain>NA1000 / CB15N</strain>
    </source>
</reference>